<proteinExistence type="inferred from homology"/>
<feature type="chain" id="PRO_0000428618" description="Putative antitoxin VapB45">
    <location>
        <begin position="1"/>
        <end position="150"/>
    </location>
</feature>
<feature type="region of interest" description="Disordered" evidence="1">
    <location>
        <begin position="124"/>
        <end position="150"/>
    </location>
</feature>
<feature type="compositionally biased region" description="Basic and acidic residues" evidence="1">
    <location>
        <begin position="141"/>
        <end position="150"/>
    </location>
</feature>
<keyword id="KW-1185">Reference proteome</keyword>
<keyword id="KW-1277">Toxin-antitoxin system</keyword>
<name>VPB45_MYCTO</name>
<comment type="function">
    <text evidence="2">Possibly the antitoxin component of a type II toxin-antitoxin (TA) system. Its cognate toxin is VapC45 (Potential).</text>
</comment>
<comment type="similarity">
    <text evidence="2">Belongs to the phD/YefM antitoxin family.</text>
</comment>
<dbReference type="EMBL" id="AE000516">
    <property type="protein sequence ID" value="AAK47612.1"/>
    <property type="molecule type" value="Genomic_DNA"/>
</dbReference>
<dbReference type="PIR" id="C70949">
    <property type="entry name" value="C70949"/>
</dbReference>
<dbReference type="RefSeq" id="WP_003899953.1">
    <property type="nucleotide sequence ID" value="NZ_KK341227.1"/>
</dbReference>
<dbReference type="SMR" id="P9WF14"/>
<dbReference type="KEGG" id="mtc:MT3272"/>
<dbReference type="PATRIC" id="fig|83331.31.peg.3522"/>
<dbReference type="HOGENOM" id="CLU_1738457_0_0_11"/>
<dbReference type="Proteomes" id="UP000001020">
    <property type="component" value="Chromosome"/>
</dbReference>
<dbReference type="GO" id="GO:0097351">
    <property type="term" value="F:toxin sequestering activity"/>
    <property type="evidence" value="ECO:0007669"/>
    <property type="project" value="TreeGrafter"/>
</dbReference>
<dbReference type="FunFam" id="3.40.1620.10:FF:000002">
    <property type="entry name" value="Antitoxin"/>
    <property type="match status" value="1"/>
</dbReference>
<dbReference type="Gene3D" id="3.40.1620.10">
    <property type="entry name" value="YefM-like domain"/>
    <property type="match status" value="1"/>
</dbReference>
<dbReference type="InterPro" id="IPR006442">
    <property type="entry name" value="Antitoxin_Phd/YefM"/>
</dbReference>
<dbReference type="InterPro" id="IPR051416">
    <property type="entry name" value="phD-YefM_TA_antitoxins"/>
</dbReference>
<dbReference type="InterPro" id="IPR036165">
    <property type="entry name" value="YefM-like_sf"/>
</dbReference>
<dbReference type="NCBIfam" id="TIGR01552">
    <property type="entry name" value="phd_fam"/>
    <property type="match status" value="1"/>
</dbReference>
<dbReference type="PANTHER" id="PTHR35377:SF5">
    <property type="entry name" value="ANTITOXIN VAPB46"/>
    <property type="match status" value="1"/>
</dbReference>
<dbReference type="PANTHER" id="PTHR35377">
    <property type="entry name" value="ANTITOXIN VAPB49-RELATED-RELATED"/>
    <property type="match status" value="1"/>
</dbReference>
<dbReference type="Pfam" id="PF02604">
    <property type="entry name" value="PhdYeFM_antitox"/>
    <property type="match status" value="1"/>
</dbReference>
<dbReference type="SUPFAM" id="SSF143120">
    <property type="entry name" value="YefM-like"/>
    <property type="match status" value="1"/>
</dbReference>
<evidence type="ECO:0000256" key="1">
    <source>
        <dbReference type="SAM" id="MobiDB-lite"/>
    </source>
</evidence>
<evidence type="ECO:0000305" key="2"/>
<reference key="1">
    <citation type="journal article" date="2002" name="J. Bacteriol.">
        <title>Whole-genome comparison of Mycobacterium tuberculosis clinical and laboratory strains.</title>
        <authorList>
            <person name="Fleischmann R.D."/>
            <person name="Alland D."/>
            <person name="Eisen J.A."/>
            <person name="Carpenter L."/>
            <person name="White O."/>
            <person name="Peterson J.D."/>
            <person name="DeBoy R.T."/>
            <person name="Dodson R.J."/>
            <person name="Gwinn M.L."/>
            <person name="Haft D.H."/>
            <person name="Hickey E.K."/>
            <person name="Kolonay J.F."/>
            <person name="Nelson W.C."/>
            <person name="Umayam L.A."/>
            <person name="Ermolaeva M.D."/>
            <person name="Salzberg S.L."/>
            <person name="Delcher A."/>
            <person name="Utterback T.R."/>
            <person name="Weidman J.F."/>
            <person name="Khouri H.M."/>
            <person name="Gill J."/>
            <person name="Mikula A."/>
            <person name="Bishai W."/>
            <person name="Jacobs W.R. Jr."/>
            <person name="Venter J.C."/>
            <person name="Fraser C.M."/>
        </authorList>
    </citation>
    <scope>NUCLEOTIDE SEQUENCE [LARGE SCALE GENOMIC DNA]</scope>
    <source>
        <strain>CDC 1551 / Oshkosh</strain>
    </source>
</reference>
<accession>P9WF14</accession>
<accession>L0TBS0</accession>
<accession>O53331</accession>
<accession>Q7D5Z5</accession>
<protein>
    <recommendedName>
        <fullName>Putative antitoxin VapB45</fullName>
    </recommendedName>
</protein>
<gene>
    <name type="primary">vapB45</name>
    <name type="ordered locus">MT3272</name>
</gene>
<sequence length="150" mass="16799">MQLGRKVTSHHDIDRFGVASTADESVYRPLPPRLRLAQVNLSRRRCRTQSDMYKSRFSECTVQSVDVSVTELRAHLSDWLDRARAGGEVVITERGIPIARLAALDSTDTLERLTAEGVIGKATAQRPVAAGRPRPRPQRPVSDRVSDQRR</sequence>
<organism>
    <name type="scientific">Mycobacterium tuberculosis (strain CDC 1551 / Oshkosh)</name>
    <dbReference type="NCBI Taxonomy" id="83331"/>
    <lineage>
        <taxon>Bacteria</taxon>
        <taxon>Bacillati</taxon>
        <taxon>Actinomycetota</taxon>
        <taxon>Actinomycetes</taxon>
        <taxon>Mycobacteriales</taxon>
        <taxon>Mycobacteriaceae</taxon>
        <taxon>Mycobacterium</taxon>
        <taxon>Mycobacterium tuberculosis complex</taxon>
    </lineage>
</organism>